<feature type="chain" id="PRO_0000290084" description="Small ribosomal subunit protein uS4c">
    <location>
        <begin position="1"/>
        <end position="201"/>
    </location>
</feature>
<feature type="domain" description="S4 RNA-binding">
    <location>
        <begin position="89"/>
        <end position="150"/>
    </location>
</feature>
<feature type="region of interest" description="Disordered" evidence="2">
    <location>
        <begin position="20"/>
        <end position="39"/>
    </location>
</feature>
<reference key="1">
    <citation type="journal article" date="1989" name="Mol. Gen. Genet.">
        <title>The complete sequence of the rice (Oryza sativa) chloroplast genome: intermolecular recombination between distinct tRNA genes accounts for a major plastid DNA inversion during the evolution of the cereals.</title>
        <authorList>
            <person name="Hiratsuka J."/>
            <person name="Shimada H."/>
            <person name="Whittier R."/>
            <person name="Ishibashi T."/>
            <person name="Sakamoto M."/>
            <person name="Mori M."/>
            <person name="Kondo C."/>
            <person name="Honji Y."/>
            <person name="Sun C.-R."/>
            <person name="Meng B.-Y."/>
            <person name="Li Y.-Q."/>
            <person name="Kanno A."/>
            <person name="Nishizawa Y."/>
            <person name="Hirai A."/>
            <person name="Shinozaki K."/>
            <person name="Sugiura M."/>
        </authorList>
    </citation>
    <scope>NUCLEOTIDE SEQUENCE [LARGE SCALE GENOMIC DNA]</scope>
    <source>
        <strain>cv. Nipponbare</strain>
    </source>
</reference>
<reference key="2">
    <citation type="journal article" date="2004" name="Plant Physiol.">
        <title>A comparison of rice chloroplast genomes.</title>
        <authorList>
            <person name="Tang J."/>
            <person name="Xia H."/>
            <person name="Cao M."/>
            <person name="Zhang X."/>
            <person name="Zeng W."/>
            <person name="Hu S."/>
            <person name="Tong W."/>
            <person name="Wang J."/>
            <person name="Wang J."/>
            <person name="Yu J."/>
            <person name="Yang H."/>
            <person name="Zhu L."/>
        </authorList>
    </citation>
    <scope>NUCLEOTIDE SEQUENCE [LARGE SCALE GENOMIC DNA]</scope>
    <source>
        <strain>cv. Nipponbare</strain>
    </source>
</reference>
<reference key="3">
    <citation type="journal article" date="2003" name="Science">
        <title>In-depth view of structure, activity, and evolution of rice chromosome 10.</title>
        <authorList>
            <person name="Yu Y."/>
            <person name="Rambo T."/>
            <person name="Currie J."/>
            <person name="Saski C."/>
            <person name="Kim H.-R."/>
            <person name="Collura K."/>
            <person name="Thompson S."/>
            <person name="Simmons J."/>
            <person name="Yang T.-J."/>
            <person name="Nah G."/>
            <person name="Patel A.J."/>
            <person name="Thurmond S."/>
            <person name="Henry D."/>
            <person name="Oates R."/>
            <person name="Palmer M."/>
            <person name="Pries G."/>
            <person name="Gibson J."/>
            <person name="Anderson H."/>
            <person name="Paradkar M."/>
            <person name="Crane L."/>
            <person name="Dale J."/>
            <person name="Carver M.B."/>
            <person name="Wood T."/>
            <person name="Frisch D."/>
            <person name="Engler F."/>
            <person name="Soderlund C."/>
            <person name="Palmer L.E."/>
            <person name="Teytelman L."/>
            <person name="Nascimento L."/>
            <person name="De la Bastide M."/>
            <person name="Spiegel L."/>
            <person name="Ware D."/>
            <person name="O'Shaughnessy A."/>
            <person name="Dike S."/>
            <person name="Dedhia N."/>
            <person name="Preston R."/>
            <person name="Huang E."/>
            <person name="Ferraro K."/>
            <person name="Kuit K."/>
            <person name="Miller B."/>
            <person name="Zutavern T."/>
            <person name="Katzenberger F."/>
            <person name="Muller S."/>
            <person name="Balija V."/>
            <person name="Martienssen R.A."/>
            <person name="Stein L."/>
            <person name="Minx P."/>
            <person name="Johnson D."/>
            <person name="Cordum H."/>
            <person name="Mardis E."/>
            <person name="Cheng Z."/>
            <person name="Jiang J."/>
            <person name="Wilson R."/>
            <person name="McCombie W.R."/>
            <person name="Wing R.A."/>
            <person name="Yuan Q."/>
            <person name="Ouyang S."/>
            <person name="Liu J."/>
            <person name="Jones K.M."/>
            <person name="Gansberger K."/>
            <person name="Moffat K."/>
            <person name="Hill J."/>
            <person name="Tsitrin T."/>
            <person name="Overton L."/>
            <person name="Bera J."/>
            <person name="Kim M."/>
            <person name="Jin S."/>
            <person name="Tallon L."/>
            <person name="Ciecko A."/>
            <person name="Pai G."/>
            <person name="Van Aken S."/>
            <person name="Utterback T."/>
            <person name="Reidmuller S."/>
            <person name="Bormann J."/>
            <person name="Feldblyum T."/>
            <person name="Hsiao J."/>
            <person name="Zismann V."/>
            <person name="Blunt S."/>
            <person name="de Vazeille A.R."/>
            <person name="Shaffer T."/>
            <person name="Koo H."/>
            <person name="Suh B."/>
            <person name="Yang Q."/>
            <person name="Haas B."/>
            <person name="Peterson J."/>
            <person name="Pertea M."/>
            <person name="Volfovsky N."/>
            <person name="Wortman J."/>
            <person name="White O."/>
            <person name="Salzberg S.L."/>
            <person name="Fraser C.M."/>
            <person name="Buell C.R."/>
            <person name="Messing J."/>
            <person name="Song R."/>
            <person name="Fuks G."/>
            <person name="Llaca V."/>
            <person name="Kovchak S."/>
            <person name="Young S."/>
            <person name="Bowers J.E."/>
            <person name="Paterson A.H."/>
            <person name="Johns M.A."/>
            <person name="Mao L."/>
            <person name="Pan H."/>
            <person name="Dean R.A."/>
        </authorList>
    </citation>
    <scope>NUCLEOTIDE SEQUENCE [LARGE SCALE GENOMIC DNA]</scope>
    <source>
        <strain>cv. Nipponbare</strain>
    </source>
</reference>
<accession>P0C488</accession>
<accession>P12147</accession>
<accession>Q6QY73</accession>
<accession>Q7G222</accession>
<dbReference type="EMBL" id="X15901">
    <property type="protein sequence ID" value="CAA33998.1"/>
    <property type="molecule type" value="Genomic_DNA"/>
</dbReference>
<dbReference type="EMBL" id="AY522330">
    <property type="protein sequence ID" value="AAS46122.1"/>
    <property type="molecule type" value="Genomic_DNA"/>
</dbReference>
<dbReference type="EMBL" id="AC074232">
    <property type="protein sequence ID" value="AAM12495.1"/>
    <property type="molecule type" value="Genomic_DNA"/>
</dbReference>
<dbReference type="PIR" id="JQ0225">
    <property type="entry name" value="R3RZ4"/>
</dbReference>
<dbReference type="RefSeq" id="NP_039385.1">
    <property type="nucleotide sequence ID" value="NC_001320.1"/>
</dbReference>
<dbReference type="SMR" id="P0C488"/>
<dbReference type="FunCoup" id="P0C488">
    <property type="interactions" value="232"/>
</dbReference>
<dbReference type="STRING" id="39947.P0C488"/>
<dbReference type="PaxDb" id="39947-P0C488"/>
<dbReference type="GeneID" id="3131457"/>
<dbReference type="KEGG" id="dosa:CAA33998.1"/>
<dbReference type="KEGG" id="osa:3131457"/>
<dbReference type="InParanoid" id="P0C488"/>
<dbReference type="OrthoDB" id="726413at2759"/>
<dbReference type="Proteomes" id="UP000000763">
    <property type="component" value="Chromosome 10"/>
</dbReference>
<dbReference type="Proteomes" id="UP000059680">
    <property type="component" value="Chloroplast"/>
</dbReference>
<dbReference type="GO" id="GO:0009507">
    <property type="term" value="C:chloroplast"/>
    <property type="evidence" value="ECO:0007669"/>
    <property type="project" value="UniProtKB-SubCell"/>
</dbReference>
<dbReference type="GO" id="GO:0009536">
    <property type="term" value="C:plastid"/>
    <property type="evidence" value="ECO:0000305"/>
    <property type="project" value="Gramene"/>
</dbReference>
<dbReference type="GO" id="GO:0015935">
    <property type="term" value="C:small ribosomal subunit"/>
    <property type="evidence" value="ECO:0000318"/>
    <property type="project" value="GO_Central"/>
</dbReference>
<dbReference type="GO" id="GO:0019843">
    <property type="term" value="F:rRNA binding"/>
    <property type="evidence" value="ECO:0000318"/>
    <property type="project" value="GO_Central"/>
</dbReference>
<dbReference type="GO" id="GO:0003735">
    <property type="term" value="F:structural constituent of ribosome"/>
    <property type="evidence" value="ECO:0000318"/>
    <property type="project" value="GO_Central"/>
</dbReference>
<dbReference type="GO" id="GO:0042274">
    <property type="term" value="P:ribosomal small subunit biogenesis"/>
    <property type="evidence" value="ECO:0000318"/>
    <property type="project" value="GO_Central"/>
</dbReference>
<dbReference type="GO" id="GO:0006412">
    <property type="term" value="P:translation"/>
    <property type="evidence" value="ECO:0007669"/>
    <property type="project" value="UniProtKB-UniRule"/>
</dbReference>
<dbReference type="CDD" id="cd00165">
    <property type="entry name" value="S4"/>
    <property type="match status" value="1"/>
</dbReference>
<dbReference type="FunFam" id="1.10.1050.10:FF:000002">
    <property type="entry name" value="30S ribosomal protein S4, chloroplastic"/>
    <property type="match status" value="1"/>
</dbReference>
<dbReference type="FunFam" id="3.10.290.10:FF:000081">
    <property type="entry name" value="30S ribosomal protein S4, chloroplastic"/>
    <property type="match status" value="1"/>
</dbReference>
<dbReference type="Gene3D" id="1.10.1050.10">
    <property type="entry name" value="Ribosomal Protein S4 Delta 41, Chain A, domain 1"/>
    <property type="match status" value="1"/>
</dbReference>
<dbReference type="Gene3D" id="3.10.290.10">
    <property type="entry name" value="RNA-binding S4 domain"/>
    <property type="match status" value="1"/>
</dbReference>
<dbReference type="HAMAP" id="MF_01306_B">
    <property type="entry name" value="Ribosomal_uS4_B"/>
    <property type="match status" value="1"/>
</dbReference>
<dbReference type="InterPro" id="IPR022801">
    <property type="entry name" value="Ribosomal_uS4"/>
</dbReference>
<dbReference type="InterPro" id="IPR005709">
    <property type="entry name" value="Ribosomal_uS4_bac-type"/>
</dbReference>
<dbReference type="InterPro" id="IPR018079">
    <property type="entry name" value="Ribosomal_uS4_CS"/>
</dbReference>
<dbReference type="InterPro" id="IPR001912">
    <property type="entry name" value="Ribosomal_uS4_N"/>
</dbReference>
<dbReference type="InterPro" id="IPR002942">
    <property type="entry name" value="S4_RNA-bd"/>
</dbReference>
<dbReference type="InterPro" id="IPR036986">
    <property type="entry name" value="S4_RNA-bd_sf"/>
</dbReference>
<dbReference type="NCBIfam" id="NF003717">
    <property type="entry name" value="PRK05327.1"/>
    <property type="match status" value="1"/>
</dbReference>
<dbReference type="NCBIfam" id="TIGR01017">
    <property type="entry name" value="rpsD_bact"/>
    <property type="match status" value="1"/>
</dbReference>
<dbReference type="PANTHER" id="PTHR11831">
    <property type="entry name" value="30S 40S RIBOSOMAL PROTEIN"/>
    <property type="match status" value="1"/>
</dbReference>
<dbReference type="PANTHER" id="PTHR11831:SF4">
    <property type="entry name" value="SMALL RIBOSOMAL SUBUNIT PROTEIN US4M"/>
    <property type="match status" value="1"/>
</dbReference>
<dbReference type="Pfam" id="PF00163">
    <property type="entry name" value="Ribosomal_S4"/>
    <property type="match status" value="1"/>
</dbReference>
<dbReference type="Pfam" id="PF01479">
    <property type="entry name" value="S4"/>
    <property type="match status" value="1"/>
</dbReference>
<dbReference type="SMART" id="SM01390">
    <property type="entry name" value="Ribosomal_S4"/>
    <property type="match status" value="1"/>
</dbReference>
<dbReference type="SMART" id="SM00363">
    <property type="entry name" value="S4"/>
    <property type="match status" value="1"/>
</dbReference>
<dbReference type="SUPFAM" id="SSF55174">
    <property type="entry name" value="Alpha-L RNA-binding motif"/>
    <property type="match status" value="1"/>
</dbReference>
<dbReference type="PROSITE" id="PS00632">
    <property type="entry name" value="RIBOSOMAL_S4"/>
    <property type="match status" value="1"/>
</dbReference>
<dbReference type="PROSITE" id="PS50889">
    <property type="entry name" value="S4"/>
    <property type="match status" value="1"/>
</dbReference>
<proteinExistence type="inferred from homology"/>
<gene>
    <name type="primary">rps4</name>
    <name type="ORF">Nip054</name>
</gene>
<evidence type="ECO:0000250" key="1"/>
<evidence type="ECO:0000256" key="2">
    <source>
        <dbReference type="SAM" id="MobiDB-lite"/>
    </source>
</evidence>
<evidence type="ECO:0000305" key="3"/>
<geneLocation type="chloroplast"/>
<organism>
    <name type="scientific">Oryza sativa subsp. japonica</name>
    <name type="common">Rice</name>
    <dbReference type="NCBI Taxonomy" id="39947"/>
    <lineage>
        <taxon>Eukaryota</taxon>
        <taxon>Viridiplantae</taxon>
        <taxon>Streptophyta</taxon>
        <taxon>Embryophyta</taxon>
        <taxon>Tracheophyta</taxon>
        <taxon>Spermatophyta</taxon>
        <taxon>Magnoliopsida</taxon>
        <taxon>Liliopsida</taxon>
        <taxon>Poales</taxon>
        <taxon>Poaceae</taxon>
        <taxon>BOP clade</taxon>
        <taxon>Oryzoideae</taxon>
        <taxon>Oryzeae</taxon>
        <taxon>Oryzinae</taxon>
        <taxon>Oryza</taxon>
        <taxon>Oryza sativa</taxon>
    </lineage>
</organism>
<name>RR4_ORYSJ</name>
<comment type="function">
    <text evidence="1">One of the primary rRNA binding proteins, it binds directly to 16S rRNA where it nucleates assembly of the body of the 30S subunit.</text>
</comment>
<comment type="function">
    <text evidence="1">With S5 and S12 plays an important role in translational accuracy.</text>
</comment>
<comment type="subunit">
    <text evidence="1">Part of the 30S ribosomal subunit. Contacts protein S5. The interaction surface between S4 and S5 is involved in control of translational fidelity (By similarity).</text>
</comment>
<comment type="subcellular location">
    <subcellularLocation>
        <location>Plastid</location>
        <location>Chloroplast</location>
    </subcellularLocation>
</comment>
<comment type="similarity">
    <text evidence="3">Belongs to the universal ribosomal protein uS4 family.</text>
</comment>
<comment type="caution">
    <text evidence="3">A stretch of the chloroplast genome is duplicated within chromosome 10 resulting in the duplication of the gene. The expression of this duplicated gene has not been demonstrated.</text>
</comment>
<sequence length="201" mass="23423">MSRYRGPRFKKIRRLGALPGLTRKTPKSGSNLKKKFHSGKKEQYRIRLQEKQKLRFHYGLTERQLLRYVHIAGKAKSSTGQVLLQLLEMRLDNILFRLGMASTIPEARQLVNHRHILVNGRIVDIPSFRCKPRDIITTKDNQRSKRLVQNSIASSDPGKLPKHLTIDTLQYKGLVKKILDRKWVGLKINELLVVEYYSRQT</sequence>
<keyword id="KW-0150">Chloroplast</keyword>
<keyword id="KW-0934">Plastid</keyword>
<keyword id="KW-1185">Reference proteome</keyword>
<keyword id="KW-0687">Ribonucleoprotein</keyword>
<keyword id="KW-0689">Ribosomal protein</keyword>
<keyword id="KW-0694">RNA-binding</keyword>
<keyword id="KW-0699">rRNA-binding</keyword>
<protein>
    <recommendedName>
        <fullName evidence="3">Small ribosomal subunit protein uS4c</fullName>
    </recommendedName>
    <alternativeName>
        <fullName>30S ribosomal protein S4, chloroplastic</fullName>
    </alternativeName>
</protein>